<proteinExistence type="inferred from homology"/>
<dbReference type="EC" id="3.6.1.9" evidence="1"/>
<dbReference type="EMBL" id="CP001099">
    <property type="protein sequence ID" value="ACF11642.1"/>
    <property type="molecule type" value="Genomic_DNA"/>
</dbReference>
<dbReference type="RefSeq" id="WP_012502475.1">
    <property type="nucleotide sequence ID" value="NC_011027.1"/>
</dbReference>
<dbReference type="SMR" id="B3QNY9"/>
<dbReference type="STRING" id="517417.Cpar_1237"/>
<dbReference type="KEGG" id="cpc:Cpar_1237"/>
<dbReference type="eggNOG" id="COG0424">
    <property type="taxonomic scope" value="Bacteria"/>
</dbReference>
<dbReference type="HOGENOM" id="CLU_040416_0_0_10"/>
<dbReference type="OrthoDB" id="9807767at2"/>
<dbReference type="Proteomes" id="UP000008811">
    <property type="component" value="Chromosome"/>
</dbReference>
<dbReference type="GO" id="GO:0005737">
    <property type="term" value="C:cytoplasm"/>
    <property type="evidence" value="ECO:0007669"/>
    <property type="project" value="UniProtKB-SubCell"/>
</dbReference>
<dbReference type="GO" id="GO:0036218">
    <property type="term" value="F:dTTP diphosphatase activity"/>
    <property type="evidence" value="ECO:0007669"/>
    <property type="project" value="RHEA"/>
</dbReference>
<dbReference type="GO" id="GO:0036221">
    <property type="term" value="F:UTP diphosphatase activity"/>
    <property type="evidence" value="ECO:0007669"/>
    <property type="project" value="RHEA"/>
</dbReference>
<dbReference type="GO" id="GO:0009117">
    <property type="term" value="P:nucleotide metabolic process"/>
    <property type="evidence" value="ECO:0007669"/>
    <property type="project" value="UniProtKB-KW"/>
</dbReference>
<dbReference type="CDD" id="cd00555">
    <property type="entry name" value="Maf"/>
    <property type="match status" value="1"/>
</dbReference>
<dbReference type="Gene3D" id="3.90.950.10">
    <property type="match status" value="1"/>
</dbReference>
<dbReference type="HAMAP" id="MF_00528">
    <property type="entry name" value="Maf"/>
    <property type="match status" value="1"/>
</dbReference>
<dbReference type="InterPro" id="IPR029001">
    <property type="entry name" value="ITPase-like_fam"/>
</dbReference>
<dbReference type="InterPro" id="IPR003697">
    <property type="entry name" value="Maf-like"/>
</dbReference>
<dbReference type="NCBIfam" id="TIGR00172">
    <property type="entry name" value="maf"/>
    <property type="match status" value="1"/>
</dbReference>
<dbReference type="PANTHER" id="PTHR43213">
    <property type="entry name" value="BIFUNCTIONAL DTTP/UTP PYROPHOSPHATASE/METHYLTRANSFERASE PROTEIN-RELATED"/>
    <property type="match status" value="1"/>
</dbReference>
<dbReference type="PANTHER" id="PTHR43213:SF5">
    <property type="entry name" value="BIFUNCTIONAL DTTP_UTP PYROPHOSPHATASE_METHYLTRANSFERASE PROTEIN-RELATED"/>
    <property type="match status" value="1"/>
</dbReference>
<dbReference type="Pfam" id="PF02545">
    <property type="entry name" value="Maf"/>
    <property type="match status" value="1"/>
</dbReference>
<dbReference type="PIRSF" id="PIRSF006305">
    <property type="entry name" value="Maf"/>
    <property type="match status" value="1"/>
</dbReference>
<dbReference type="SUPFAM" id="SSF52972">
    <property type="entry name" value="ITPase-like"/>
    <property type="match status" value="1"/>
</dbReference>
<reference key="1">
    <citation type="submission" date="2008-06" db="EMBL/GenBank/DDBJ databases">
        <title>Complete sequence of Chlorobaculum parvum NCIB 8327.</title>
        <authorList>
            <consortium name="US DOE Joint Genome Institute"/>
            <person name="Lucas S."/>
            <person name="Copeland A."/>
            <person name="Lapidus A."/>
            <person name="Glavina del Rio T."/>
            <person name="Dalin E."/>
            <person name="Tice H."/>
            <person name="Bruce D."/>
            <person name="Goodwin L."/>
            <person name="Pitluck S."/>
            <person name="Schmutz J."/>
            <person name="Larimer F."/>
            <person name="Land M."/>
            <person name="Hauser L."/>
            <person name="Kyrpides N."/>
            <person name="Mikhailova N."/>
            <person name="Zhao F."/>
            <person name="Li T."/>
            <person name="Liu Z."/>
            <person name="Overmann J."/>
            <person name="Bryant D.A."/>
            <person name="Richardson P."/>
        </authorList>
    </citation>
    <scope>NUCLEOTIDE SEQUENCE [LARGE SCALE GENOMIC DNA]</scope>
    <source>
        <strain>DSM 263 / NCIMB 8327</strain>
    </source>
</reference>
<sequence length="199" mass="21508">MTSRRKLILASQSPRRRELLAMTGIPFETASVEIDETFDPALTVEKNVMAISKQKAEAVMWTLPQDAGEAIVLGSDTTVVLDGAALGKPGDADHAFEMLSALQGRSHEVLTGFCILHDGKAITDYARTIVEIGAMTPGEITRYIEVMKPFDKAGSYGIQDPLLACFVTGIDGCYYNVVGLPVSKVYAALKPLFPLDANR</sequence>
<name>NTPPA_CHLP8</name>
<organism>
    <name type="scientific">Chlorobaculum parvum (strain DSM 263 / NCIMB 8327)</name>
    <name type="common">Chlorobium vibrioforme subsp. thiosulfatophilum</name>
    <dbReference type="NCBI Taxonomy" id="517417"/>
    <lineage>
        <taxon>Bacteria</taxon>
        <taxon>Pseudomonadati</taxon>
        <taxon>Chlorobiota</taxon>
        <taxon>Chlorobiia</taxon>
        <taxon>Chlorobiales</taxon>
        <taxon>Chlorobiaceae</taxon>
        <taxon>Chlorobaculum</taxon>
    </lineage>
</organism>
<keyword id="KW-0963">Cytoplasm</keyword>
<keyword id="KW-0378">Hydrolase</keyword>
<keyword id="KW-0546">Nucleotide metabolism</keyword>
<protein>
    <recommendedName>
        <fullName evidence="1">dTTP/UTP pyrophosphatase</fullName>
        <shortName evidence="1">dTTPase/UTPase</shortName>
        <ecNumber evidence="1">3.6.1.9</ecNumber>
    </recommendedName>
    <alternativeName>
        <fullName evidence="1">Nucleoside triphosphate pyrophosphatase</fullName>
    </alternativeName>
    <alternativeName>
        <fullName evidence="1">Nucleotide pyrophosphatase</fullName>
        <shortName evidence="1">Nucleotide PPase</shortName>
    </alternativeName>
</protein>
<feature type="chain" id="PRO_1000127774" description="dTTP/UTP pyrophosphatase">
    <location>
        <begin position="1"/>
        <end position="199"/>
    </location>
</feature>
<feature type="active site" description="Proton acceptor" evidence="1">
    <location>
        <position position="76"/>
    </location>
</feature>
<feature type="site" description="Important for substrate specificity" evidence="1">
    <location>
        <position position="15"/>
    </location>
</feature>
<feature type="site" description="Important for substrate specificity" evidence="1">
    <location>
        <position position="77"/>
    </location>
</feature>
<feature type="site" description="Important for substrate specificity" evidence="1">
    <location>
        <position position="159"/>
    </location>
</feature>
<evidence type="ECO:0000255" key="1">
    <source>
        <dbReference type="HAMAP-Rule" id="MF_00528"/>
    </source>
</evidence>
<gene>
    <name type="ordered locus">Cpar_1237</name>
</gene>
<accession>B3QNY9</accession>
<comment type="function">
    <text evidence="1">Nucleoside triphosphate pyrophosphatase that hydrolyzes dTTP and UTP. May have a dual role in cell division arrest and in preventing the incorporation of modified nucleotides into cellular nucleic acids.</text>
</comment>
<comment type="catalytic activity">
    <reaction evidence="1">
        <text>dTTP + H2O = dTMP + diphosphate + H(+)</text>
        <dbReference type="Rhea" id="RHEA:28534"/>
        <dbReference type="ChEBI" id="CHEBI:15377"/>
        <dbReference type="ChEBI" id="CHEBI:15378"/>
        <dbReference type="ChEBI" id="CHEBI:33019"/>
        <dbReference type="ChEBI" id="CHEBI:37568"/>
        <dbReference type="ChEBI" id="CHEBI:63528"/>
        <dbReference type="EC" id="3.6.1.9"/>
    </reaction>
</comment>
<comment type="catalytic activity">
    <reaction evidence="1">
        <text>UTP + H2O = UMP + diphosphate + H(+)</text>
        <dbReference type="Rhea" id="RHEA:29395"/>
        <dbReference type="ChEBI" id="CHEBI:15377"/>
        <dbReference type="ChEBI" id="CHEBI:15378"/>
        <dbReference type="ChEBI" id="CHEBI:33019"/>
        <dbReference type="ChEBI" id="CHEBI:46398"/>
        <dbReference type="ChEBI" id="CHEBI:57865"/>
        <dbReference type="EC" id="3.6.1.9"/>
    </reaction>
</comment>
<comment type="cofactor">
    <cofactor evidence="1">
        <name>a divalent metal cation</name>
        <dbReference type="ChEBI" id="CHEBI:60240"/>
    </cofactor>
</comment>
<comment type="subcellular location">
    <subcellularLocation>
        <location evidence="1">Cytoplasm</location>
    </subcellularLocation>
</comment>
<comment type="similarity">
    <text evidence="1">Belongs to the Maf family. YhdE subfamily.</text>
</comment>